<organism>
    <name type="scientific">Oryza sativa subsp. japonica</name>
    <name type="common">Rice</name>
    <dbReference type="NCBI Taxonomy" id="39947"/>
    <lineage>
        <taxon>Eukaryota</taxon>
        <taxon>Viridiplantae</taxon>
        <taxon>Streptophyta</taxon>
        <taxon>Embryophyta</taxon>
        <taxon>Tracheophyta</taxon>
        <taxon>Spermatophyta</taxon>
        <taxon>Magnoliopsida</taxon>
        <taxon>Liliopsida</taxon>
        <taxon>Poales</taxon>
        <taxon>Poaceae</taxon>
        <taxon>BOP clade</taxon>
        <taxon>Oryzoideae</taxon>
        <taxon>Oryzeae</taxon>
        <taxon>Oryzinae</taxon>
        <taxon>Oryza</taxon>
        <taxon>Oryza sativa</taxon>
    </lineage>
</organism>
<dbReference type="EC" id="3.6.4.13"/>
<dbReference type="EMBL" id="AP004334">
    <property type="protein sequence ID" value="BAC07111.1"/>
    <property type="molecule type" value="Genomic_DNA"/>
</dbReference>
<dbReference type="EMBL" id="AP004339">
    <property type="protein sequence ID" value="BAC10155.1"/>
    <property type="molecule type" value="Genomic_DNA"/>
</dbReference>
<dbReference type="EMBL" id="AP008213">
    <property type="protein sequence ID" value="BAF22288.1"/>
    <property type="molecule type" value="Genomic_DNA"/>
</dbReference>
<dbReference type="EMBL" id="AP014963">
    <property type="status" value="NOT_ANNOTATED_CDS"/>
    <property type="molecule type" value="Genomic_DNA"/>
</dbReference>
<dbReference type="EMBL" id="CM000144">
    <property type="protein sequence ID" value="EAZ40780.1"/>
    <property type="molecule type" value="Genomic_DNA"/>
</dbReference>
<dbReference type="RefSeq" id="XP_015647288.1">
    <property type="nucleotide sequence ID" value="XM_015791802.1"/>
</dbReference>
<dbReference type="SMR" id="Q8L4E9"/>
<dbReference type="FunCoup" id="Q8L4E9">
    <property type="interactions" value="971"/>
</dbReference>
<dbReference type="STRING" id="39947.Q8L4E9"/>
<dbReference type="PaxDb" id="39947-Q8L4E9"/>
<dbReference type="EnsemblPlants" id="Os07t0633500-01">
    <property type="protein sequence ID" value="Os07t0633500-01"/>
    <property type="gene ID" value="Os07g0633500"/>
</dbReference>
<dbReference type="Gramene" id="Os07t0633500-01">
    <property type="protein sequence ID" value="Os07t0633500-01"/>
    <property type="gene ID" value="Os07g0633500"/>
</dbReference>
<dbReference type="KEGG" id="dosa:Os07g0633500"/>
<dbReference type="eggNOG" id="KOG0340">
    <property type="taxonomic scope" value="Eukaryota"/>
</dbReference>
<dbReference type="HOGENOM" id="CLU_003041_1_1_1"/>
<dbReference type="InParanoid" id="Q8L4E9"/>
<dbReference type="OrthoDB" id="10261904at2759"/>
<dbReference type="Proteomes" id="UP000000763">
    <property type="component" value="Chromosome 7"/>
</dbReference>
<dbReference type="Proteomes" id="UP000007752">
    <property type="component" value="Chromosome 7"/>
</dbReference>
<dbReference type="Proteomes" id="UP000059680">
    <property type="component" value="Chromosome 7"/>
</dbReference>
<dbReference type="GO" id="GO:0005634">
    <property type="term" value="C:nucleus"/>
    <property type="evidence" value="ECO:0000318"/>
    <property type="project" value="GO_Central"/>
</dbReference>
<dbReference type="GO" id="GO:0005524">
    <property type="term" value="F:ATP binding"/>
    <property type="evidence" value="ECO:0007669"/>
    <property type="project" value="UniProtKB-KW"/>
</dbReference>
<dbReference type="GO" id="GO:0016887">
    <property type="term" value="F:ATP hydrolysis activity"/>
    <property type="evidence" value="ECO:0007669"/>
    <property type="project" value="RHEA"/>
</dbReference>
<dbReference type="GO" id="GO:0003723">
    <property type="term" value="F:RNA binding"/>
    <property type="evidence" value="ECO:0007669"/>
    <property type="project" value="UniProtKB-KW"/>
</dbReference>
<dbReference type="GO" id="GO:0003724">
    <property type="term" value="F:RNA helicase activity"/>
    <property type="evidence" value="ECO:0007669"/>
    <property type="project" value="UniProtKB-EC"/>
</dbReference>
<dbReference type="GO" id="GO:0006364">
    <property type="term" value="P:rRNA processing"/>
    <property type="evidence" value="ECO:0000318"/>
    <property type="project" value="GO_Central"/>
</dbReference>
<dbReference type="CDD" id="cd17955">
    <property type="entry name" value="DEADc_DDX49"/>
    <property type="match status" value="1"/>
</dbReference>
<dbReference type="CDD" id="cd18787">
    <property type="entry name" value="SF2_C_DEAD"/>
    <property type="match status" value="1"/>
</dbReference>
<dbReference type="Gene3D" id="3.40.50.300">
    <property type="entry name" value="P-loop containing nucleotide triphosphate hydrolases"/>
    <property type="match status" value="2"/>
</dbReference>
<dbReference type="InterPro" id="IPR011545">
    <property type="entry name" value="DEAD/DEAH_box_helicase_dom"/>
</dbReference>
<dbReference type="InterPro" id="IPR050079">
    <property type="entry name" value="DEAD_box_RNA_helicase"/>
</dbReference>
<dbReference type="InterPro" id="IPR014001">
    <property type="entry name" value="Helicase_ATP-bd"/>
</dbReference>
<dbReference type="InterPro" id="IPR001650">
    <property type="entry name" value="Helicase_C-like"/>
</dbReference>
<dbReference type="InterPro" id="IPR027417">
    <property type="entry name" value="P-loop_NTPase"/>
</dbReference>
<dbReference type="InterPro" id="IPR000629">
    <property type="entry name" value="RNA-helicase_DEAD-box_CS"/>
</dbReference>
<dbReference type="InterPro" id="IPR014014">
    <property type="entry name" value="RNA_helicase_DEAD_Q_motif"/>
</dbReference>
<dbReference type="PANTHER" id="PTHR47959:SF24">
    <property type="entry name" value="ATP-DEPENDENT RNA HELICASE"/>
    <property type="match status" value="1"/>
</dbReference>
<dbReference type="PANTHER" id="PTHR47959">
    <property type="entry name" value="ATP-DEPENDENT RNA HELICASE RHLE-RELATED"/>
    <property type="match status" value="1"/>
</dbReference>
<dbReference type="Pfam" id="PF00270">
    <property type="entry name" value="DEAD"/>
    <property type="match status" value="1"/>
</dbReference>
<dbReference type="Pfam" id="PF00271">
    <property type="entry name" value="Helicase_C"/>
    <property type="match status" value="1"/>
</dbReference>
<dbReference type="SMART" id="SM00487">
    <property type="entry name" value="DEXDc"/>
    <property type="match status" value="1"/>
</dbReference>
<dbReference type="SMART" id="SM00490">
    <property type="entry name" value="HELICc"/>
    <property type="match status" value="1"/>
</dbReference>
<dbReference type="SUPFAM" id="SSF52540">
    <property type="entry name" value="P-loop containing nucleoside triphosphate hydrolases"/>
    <property type="match status" value="1"/>
</dbReference>
<dbReference type="PROSITE" id="PS00039">
    <property type="entry name" value="DEAD_ATP_HELICASE"/>
    <property type="match status" value="1"/>
</dbReference>
<dbReference type="PROSITE" id="PS51192">
    <property type="entry name" value="HELICASE_ATP_BIND_1"/>
    <property type="match status" value="1"/>
</dbReference>
<dbReference type="PROSITE" id="PS51194">
    <property type="entry name" value="HELICASE_CTER"/>
    <property type="match status" value="1"/>
</dbReference>
<dbReference type="PROSITE" id="PS51195">
    <property type="entry name" value="Q_MOTIF"/>
    <property type="match status" value="1"/>
</dbReference>
<feature type="chain" id="PRO_0000282504" description="DEAD-box ATP-dependent RNA helicase 36">
    <location>
        <begin position="1"/>
        <end position="501"/>
    </location>
</feature>
<feature type="domain" description="Helicase ATP-binding" evidence="2">
    <location>
        <begin position="108"/>
        <end position="281"/>
    </location>
</feature>
<feature type="domain" description="Helicase C-terminal" evidence="3">
    <location>
        <begin position="292"/>
        <end position="456"/>
    </location>
</feature>
<feature type="region of interest" description="Disordered" evidence="4">
    <location>
        <begin position="1"/>
        <end position="68"/>
    </location>
</feature>
<feature type="region of interest" description="Disordered" evidence="4">
    <location>
        <begin position="473"/>
        <end position="501"/>
    </location>
</feature>
<feature type="coiled-coil region" evidence="1">
    <location>
        <begin position="475"/>
        <end position="501"/>
    </location>
</feature>
<feature type="short sequence motif" description="Q motif">
    <location>
        <begin position="77"/>
        <end position="105"/>
    </location>
</feature>
<feature type="short sequence motif" description="DEAD box">
    <location>
        <begin position="229"/>
        <end position="232"/>
    </location>
</feature>
<feature type="compositionally biased region" description="Pro residues" evidence="4">
    <location>
        <begin position="36"/>
        <end position="46"/>
    </location>
</feature>
<feature type="compositionally biased region" description="Low complexity" evidence="4">
    <location>
        <begin position="59"/>
        <end position="68"/>
    </location>
</feature>
<feature type="compositionally biased region" description="Basic and acidic residues" evidence="4">
    <location>
        <begin position="473"/>
        <end position="486"/>
    </location>
</feature>
<feature type="compositionally biased region" description="Basic residues" evidence="4">
    <location>
        <begin position="487"/>
        <end position="501"/>
    </location>
</feature>
<feature type="binding site" evidence="2">
    <location>
        <begin position="121"/>
        <end position="128"/>
    </location>
    <ligand>
        <name>ATP</name>
        <dbReference type="ChEBI" id="CHEBI:30616"/>
    </ligand>
</feature>
<keyword id="KW-0067">ATP-binding</keyword>
<keyword id="KW-0175">Coiled coil</keyword>
<keyword id="KW-0347">Helicase</keyword>
<keyword id="KW-0378">Hydrolase</keyword>
<keyword id="KW-0547">Nucleotide-binding</keyword>
<keyword id="KW-1185">Reference proteome</keyword>
<keyword id="KW-0694">RNA-binding</keyword>
<name>RH36_ORYSJ</name>
<reference key="1">
    <citation type="journal article" date="2005" name="Nature">
        <title>The map-based sequence of the rice genome.</title>
        <authorList>
            <consortium name="International rice genome sequencing project (IRGSP)"/>
        </authorList>
    </citation>
    <scope>NUCLEOTIDE SEQUENCE [LARGE SCALE GENOMIC DNA]</scope>
    <source>
        <strain>cv. Nipponbare</strain>
    </source>
</reference>
<reference key="2">
    <citation type="journal article" date="2008" name="Nucleic Acids Res.">
        <title>The rice annotation project database (RAP-DB): 2008 update.</title>
        <authorList>
            <consortium name="The rice annotation project (RAP)"/>
        </authorList>
    </citation>
    <scope>GENOME REANNOTATION</scope>
    <source>
        <strain>cv. Nipponbare</strain>
    </source>
</reference>
<reference key="3">
    <citation type="journal article" date="2013" name="Rice">
        <title>Improvement of the Oryza sativa Nipponbare reference genome using next generation sequence and optical map data.</title>
        <authorList>
            <person name="Kawahara Y."/>
            <person name="de la Bastide M."/>
            <person name="Hamilton J.P."/>
            <person name="Kanamori H."/>
            <person name="McCombie W.R."/>
            <person name="Ouyang S."/>
            <person name="Schwartz D.C."/>
            <person name="Tanaka T."/>
            <person name="Wu J."/>
            <person name="Zhou S."/>
            <person name="Childs K.L."/>
            <person name="Davidson R.M."/>
            <person name="Lin H."/>
            <person name="Quesada-Ocampo L."/>
            <person name="Vaillancourt B."/>
            <person name="Sakai H."/>
            <person name="Lee S.S."/>
            <person name="Kim J."/>
            <person name="Numa H."/>
            <person name="Itoh T."/>
            <person name="Buell C.R."/>
            <person name="Matsumoto T."/>
        </authorList>
    </citation>
    <scope>GENOME REANNOTATION</scope>
    <source>
        <strain>cv. Nipponbare</strain>
    </source>
</reference>
<reference key="4">
    <citation type="journal article" date="2005" name="PLoS Biol.">
        <title>The genomes of Oryza sativa: a history of duplications.</title>
        <authorList>
            <person name="Yu J."/>
            <person name="Wang J."/>
            <person name="Lin W."/>
            <person name="Li S."/>
            <person name="Li H."/>
            <person name="Zhou J."/>
            <person name="Ni P."/>
            <person name="Dong W."/>
            <person name="Hu S."/>
            <person name="Zeng C."/>
            <person name="Zhang J."/>
            <person name="Zhang Y."/>
            <person name="Li R."/>
            <person name="Xu Z."/>
            <person name="Li S."/>
            <person name="Li X."/>
            <person name="Zheng H."/>
            <person name="Cong L."/>
            <person name="Lin L."/>
            <person name="Yin J."/>
            <person name="Geng J."/>
            <person name="Li G."/>
            <person name="Shi J."/>
            <person name="Liu J."/>
            <person name="Lv H."/>
            <person name="Li J."/>
            <person name="Wang J."/>
            <person name="Deng Y."/>
            <person name="Ran L."/>
            <person name="Shi X."/>
            <person name="Wang X."/>
            <person name="Wu Q."/>
            <person name="Li C."/>
            <person name="Ren X."/>
            <person name="Wang J."/>
            <person name="Wang X."/>
            <person name="Li D."/>
            <person name="Liu D."/>
            <person name="Zhang X."/>
            <person name="Ji Z."/>
            <person name="Zhao W."/>
            <person name="Sun Y."/>
            <person name="Zhang Z."/>
            <person name="Bao J."/>
            <person name="Han Y."/>
            <person name="Dong L."/>
            <person name="Ji J."/>
            <person name="Chen P."/>
            <person name="Wu S."/>
            <person name="Liu J."/>
            <person name="Xiao Y."/>
            <person name="Bu D."/>
            <person name="Tan J."/>
            <person name="Yang L."/>
            <person name="Ye C."/>
            <person name="Zhang J."/>
            <person name="Xu J."/>
            <person name="Zhou Y."/>
            <person name="Yu Y."/>
            <person name="Zhang B."/>
            <person name="Zhuang S."/>
            <person name="Wei H."/>
            <person name="Liu B."/>
            <person name="Lei M."/>
            <person name="Yu H."/>
            <person name="Li Y."/>
            <person name="Xu H."/>
            <person name="Wei S."/>
            <person name="He X."/>
            <person name="Fang L."/>
            <person name="Zhang Z."/>
            <person name="Zhang Y."/>
            <person name="Huang X."/>
            <person name="Su Z."/>
            <person name="Tong W."/>
            <person name="Li J."/>
            <person name="Tong Z."/>
            <person name="Li S."/>
            <person name="Ye J."/>
            <person name="Wang L."/>
            <person name="Fang L."/>
            <person name="Lei T."/>
            <person name="Chen C.-S."/>
            <person name="Chen H.-C."/>
            <person name="Xu Z."/>
            <person name="Li H."/>
            <person name="Huang H."/>
            <person name="Zhang F."/>
            <person name="Xu H."/>
            <person name="Li N."/>
            <person name="Zhao C."/>
            <person name="Li S."/>
            <person name="Dong L."/>
            <person name="Huang Y."/>
            <person name="Li L."/>
            <person name="Xi Y."/>
            <person name="Qi Q."/>
            <person name="Li W."/>
            <person name="Zhang B."/>
            <person name="Hu W."/>
            <person name="Zhang Y."/>
            <person name="Tian X."/>
            <person name="Jiao Y."/>
            <person name="Liang X."/>
            <person name="Jin J."/>
            <person name="Gao L."/>
            <person name="Zheng W."/>
            <person name="Hao B."/>
            <person name="Liu S.-M."/>
            <person name="Wang W."/>
            <person name="Yuan L."/>
            <person name="Cao M."/>
            <person name="McDermott J."/>
            <person name="Samudrala R."/>
            <person name="Wang J."/>
            <person name="Wong G.K.-S."/>
            <person name="Yang H."/>
        </authorList>
    </citation>
    <scope>NUCLEOTIDE SEQUENCE [LARGE SCALE GENOMIC DNA]</scope>
    <source>
        <strain>cv. Nipponbare</strain>
    </source>
</reference>
<sequence>MEVDGEARPFLLFSKPKSSKKKPKQEAEPQVHTQPEEPPNPSPSPAIEPDLRDSDEAPAAAVTEHAGDDAAAAAVPSTFAELGLSQWLVDVCDSLGMRVPTAVQRRCIPRALEGRDVLGIAETGSGKTAAFALPILHRLGEDPYGVAALALAPTRELAAQLAEQFRALGAPLGLRCLAAIGGFDSLGQAKGLARRPHVVVATPGRIATLINDDPDLAKVFARTKFLVLDEADRVLDINFEEDLRVIFGSLPKKRQTFLFSATISDNLRSLLELSGNNSYFFEAYEGFKTVDTLKQLYIHVPPDAKELYLFYLLSKMNEDNIRSVIVFVSTCRTCQYLDFLLEELGHPAVSLHSHKPQSRRLAALHNFKSSKVPVLLATDVASRGLDIQTVDLVINYDVPRYPRDYIHRVGRTARATRGGLSISFITTQRDIRLLHEIEDVVGKQLGAYDGEMRDVNKDATKVFKARRLANMKMADEGHEDKVQARKEQKKRAQERKRKHDE</sequence>
<accession>Q8L4E9</accession>
<proteinExistence type="inferred from homology"/>
<protein>
    <recommendedName>
        <fullName>DEAD-box ATP-dependent RNA helicase 36</fullName>
        <ecNumber>3.6.4.13</ecNumber>
    </recommendedName>
</protein>
<gene>
    <name type="ordered locus">Os07g0633500</name>
    <name type="ordered locus">LOC_Os07g43980</name>
    <name type="ORF">OsJ_25257</name>
    <name type="ORF">P0455H11.103</name>
    <name type="ORF">P0519E12.133</name>
</gene>
<comment type="catalytic activity">
    <reaction>
        <text>ATP + H2O = ADP + phosphate + H(+)</text>
        <dbReference type="Rhea" id="RHEA:13065"/>
        <dbReference type="ChEBI" id="CHEBI:15377"/>
        <dbReference type="ChEBI" id="CHEBI:15378"/>
        <dbReference type="ChEBI" id="CHEBI:30616"/>
        <dbReference type="ChEBI" id="CHEBI:43474"/>
        <dbReference type="ChEBI" id="CHEBI:456216"/>
        <dbReference type="EC" id="3.6.4.13"/>
    </reaction>
</comment>
<comment type="domain">
    <text>The Q motif is unique to and characteristic of the DEAD box family of RNA helicases and controls ATP binding and hydrolysis.</text>
</comment>
<comment type="similarity">
    <text evidence="5">Belongs to the DEAD box helicase family. DDX49/DBP8 subfamily.</text>
</comment>
<evidence type="ECO:0000255" key="1"/>
<evidence type="ECO:0000255" key="2">
    <source>
        <dbReference type="PROSITE-ProRule" id="PRU00541"/>
    </source>
</evidence>
<evidence type="ECO:0000255" key="3">
    <source>
        <dbReference type="PROSITE-ProRule" id="PRU00542"/>
    </source>
</evidence>
<evidence type="ECO:0000256" key="4">
    <source>
        <dbReference type="SAM" id="MobiDB-lite"/>
    </source>
</evidence>
<evidence type="ECO:0000305" key="5"/>